<sequence length="851" mass="95060">MRSLLVFRKIPSRIRLRNLRNNKPFCSQSQFPKESENPSQEQRLLVYGSTSEENPVTSKVSLLSAKPEQKDDASVIDVLLNRRNNPEAALRFYNWARPWRGSFEDGDVFWVLIHILVSSPETYGRASDLLIRYVSTSNPTPMASVLVSKLVDSAKSFGFEVNSRAFNYLLNAYSKDRQTDHAVDIVNQMLELDVIPFFPYVNRTLSALVQRNSLTEAKELYSRMVAIGVDGDNVTTQLLMRASLREEKPAEALEVLSRAIERGAEPDSLLYSLAVQACCKTLDLAMANSLLREMKEKKLCVPSQETYTSVILASVKQGNMDDAIRLKDEMLSDGISMNVVAATSLITGHCKNNDLVSALVLFDKMEKEGPSPNSVTFSVLIEWFRKNGEMEKALEFYKKMEVLGLTPSVFHVHTIIQGWLKGQKHEEALKLFDESFETGLANVFVCNTILSWLCKQGKTDEATELLSKMESRGIGPNVVSYNNVMLGHCRQKNMDLARIVFSNILEKGLKPNNYTYSILIDGCFRNHDEQNALEVVNHMTSSNIEVNGVVYQTIINGLCKVGQTSKARELLANMIEEKRLCVSCMSYNSIIDGFFKEGEMDSAVAAYEEMCGNGISPNVITYTSLMNGLCKNNRMDQALEMRDEMKNKGVKLDIPAYGALIDGFCKRSNMESASALFSELLEEGLNPSQPIYNSLISGFRNLGNMVAALDLYKKMLKDGLRCDLGTYTTLIDGLLKDGNLILASELYTEMQAVGLVPDEIIYTVIVNGLSKKGQFVKVVKMFEEMKKNNVTPNVLIYNAVIAGHYREGNLDEAFRLHDEMLDKGILPDGATFDILVSGQVGNLQPVRAASL</sequence>
<evidence type="ECO:0000269" key="1">
    <source>
    </source>
</evidence>
<evidence type="ECO:0000305" key="2"/>
<evidence type="ECO:0000305" key="3">
    <source>
    </source>
</evidence>
<proteinExistence type="evidence at protein level"/>
<protein>
    <recommendedName>
        <fullName>Pentatricopeptide repeat-containing protein At3g54980, mitochondrial</fullName>
    </recommendedName>
</protein>
<comment type="subcellular location">
    <subcellularLocation>
        <location evidence="3">Mitochondrion</location>
    </subcellularLocation>
</comment>
<comment type="similarity">
    <text evidence="2">Belongs to the PPR family. P subfamily.</text>
</comment>
<comment type="online information" name="Pentatricopeptide repeat proteins">
    <link uri="https://ppr.plantenergy.uwa.edu.au"/>
</comment>
<accession>Q9SV46</accession>
<reference key="1">
    <citation type="journal article" date="2000" name="Nature">
        <title>Sequence and analysis of chromosome 3 of the plant Arabidopsis thaliana.</title>
        <authorList>
            <person name="Salanoubat M."/>
            <person name="Lemcke K."/>
            <person name="Rieger M."/>
            <person name="Ansorge W."/>
            <person name="Unseld M."/>
            <person name="Fartmann B."/>
            <person name="Valle G."/>
            <person name="Bloecker H."/>
            <person name="Perez-Alonso M."/>
            <person name="Obermaier B."/>
            <person name="Delseny M."/>
            <person name="Boutry M."/>
            <person name="Grivell L.A."/>
            <person name="Mache R."/>
            <person name="Puigdomenech P."/>
            <person name="De Simone V."/>
            <person name="Choisne N."/>
            <person name="Artiguenave F."/>
            <person name="Robert C."/>
            <person name="Brottier P."/>
            <person name="Wincker P."/>
            <person name="Cattolico L."/>
            <person name="Weissenbach J."/>
            <person name="Saurin W."/>
            <person name="Quetier F."/>
            <person name="Schaefer M."/>
            <person name="Mueller-Auer S."/>
            <person name="Gabel C."/>
            <person name="Fuchs M."/>
            <person name="Benes V."/>
            <person name="Wurmbach E."/>
            <person name="Drzonek H."/>
            <person name="Erfle H."/>
            <person name="Jordan N."/>
            <person name="Bangert S."/>
            <person name="Wiedelmann R."/>
            <person name="Kranz H."/>
            <person name="Voss H."/>
            <person name="Holland R."/>
            <person name="Brandt P."/>
            <person name="Nyakatura G."/>
            <person name="Vezzi A."/>
            <person name="D'Angelo M."/>
            <person name="Pallavicini A."/>
            <person name="Toppo S."/>
            <person name="Simionati B."/>
            <person name="Conrad A."/>
            <person name="Hornischer K."/>
            <person name="Kauer G."/>
            <person name="Loehnert T.-H."/>
            <person name="Nordsiek G."/>
            <person name="Reichelt J."/>
            <person name="Scharfe M."/>
            <person name="Schoen O."/>
            <person name="Bargues M."/>
            <person name="Terol J."/>
            <person name="Climent J."/>
            <person name="Navarro P."/>
            <person name="Collado C."/>
            <person name="Perez-Perez A."/>
            <person name="Ottenwaelder B."/>
            <person name="Duchemin D."/>
            <person name="Cooke R."/>
            <person name="Laudie M."/>
            <person name="Berger-Llauro C."/>
            <person name="Purnelle B."/>
            <person name="Masuy D."/>
            <person name="de Haan M."/>
            <person name="Maarse A.C."/>
            <person name="Alcaraz J.-P."/>
            <person name="Cottet A."/>
            <person name="Casacuberta E."/>
            <person name="Monfort A."/>
            <person name="Argiriou A."/>
            <person name="Flores M."/>
            <person name="Liguori R."/>
            <person name="Vitale D."/>
            <person name="Mannhaupt G."/>
            <person name="Haase D."/>
            <person name="Schoof H."/>
            <person name="Rudd S."/>
            <person name="Zaccaria P."/>
            <person name="Mewes H.-W."/>
            <person name="Mayer K.F.X."/>
            <person name="Kaul S."/>
            <person name="Town C.D."/>
            <person name="Koo H.L."/>
            <person name="Tallon L.J."/>
            <person name="Jenkins J."/>
            <person name="Rooney T."/>
            <person name="Rizzo M."/>
            <person name="Walts A."/>
            <person name="Utterback T."/>
            <person name="Fujii C.Y."/>
            <person name="Shea T.P."/>
            <person name="Creasy T.H."/>
            <person name="Haas B."/>
            <person name="Maiti R."/>
            <person name="Wu D."/>
            <person name="Peterson J."/>
            <person name="Van Aken S."/>
            <person name="Pai G."/>
            <person name="Militscher J."/>
            <person name="Sellers P."/>
            <person name="Gill J.E."/>
            <person name="Feldblyum T.V."/>
            <person name="Preuss D."/>
            <person name="Lin X."/>
            <person name="Nierman W.C."/>
            <person name="Salzberg S.L."/>
            <person name="White O."/>
            <person name="Venter J.C."/>
            <person name="Fraser C.M."/>
            <person name="Kaneko T."/>
            <person name="Nakamura Y."/>
            <person name="Sato S."/>
            <person name="Kato T."/>
            <person name="Asamizu E."/>
            <person name="Sasamoto S."/>
            <person name="Kimura T."/>
            <person name="Idesawa K."/>
            <person name="Kawashima K."/>
            <person name="Kishida Y."/>
            <person name="Kiyokawa C."/>
            <person name="Kohara M."/>
            <person name="Matsumoto M."/>
            <person name="Matsuno A."/>
            <person name="Muraki A."/>
            <person name="Nakayama S."/>
            <person name="Nakazaki N."/>
            <person name="Shinpo S."/>
            <person name="Takeuchi C."/>
            <person name="Wada T."/>
            <person name="Watanabe A."/>
            <person name="Yamada M."/>
            <person name="Yasuda M."/>
            <person name="Tabata S."/>
        </authorList>
    </citation>
    <scope>NUCLEOTIDE SEQUENCE [LARGE SCALE GENOMIC DNA]</scope>
    <source>
        <strain>cv. Columbia</strain>
    </source>
</reference>
<reference key="2">
    <citation type="journal article" date="2017" name="Plant J.">
        <title>Araport11: a complete reannotation of the Arabidopsis thaliana reference genome.</title>
        <authorList>
            <person name="Cheng C.Y."/>
            <person name="Krishnakumar V."/>
            <person name="Chan A.P."/>
            <person name="Thibaud-Nissen F."/>
            <person name="Schobel S."/>
            <person name="Town C.D."/>
        </authorList>
    </citation>
    <scope>GENOME REANNOTATION</scope>
    <source>
        <strain>cv. Columbia</strain>
    </source>
</reference>
<reference key="3">
    <citation type="journal article" date="2003" name="Science">
        <title>Empirical analysis of transcriptional activity in the Arabidopsis genome.</title>
        <authorList>
            <person name="Yamada K."/>
            <person name="Lim J."/>
            <person name="Dale J.M."/>
            <person name="Chen H."/>
            <person name="Shinn P."/>
            <person name="Palm C.J."/>
            <person name="Southwick A.M."/>
            <person name="Wu H.C."/>
            <person name="Kim C.J."/>
            <person name="Nguyen M."/>
            <person name="Pham P.K."/>
            <person name="Cheuk R.F."/>
            <person name="Karlin-Newmann G."/>
            <person name="Liu S.X."/>
            <person name="Lam B."/>
            <person name="Sakano H."/>
            <person name="Wu T."/>
            <person name="Yu G."/>
            <person name="Miranda M."/>
            <person name="Quach H.L."/>
            <person name="Tripp M."/>
            <person name="Chang C.H."/>
            <person name="Lee J.M."/>
            <person name="Toriumi M.J."/>
            <person name="Chan M.M."/>
            <person name="Tang C.C."/>
            <person name="Onodera C.S."/>
            <person name="Deng J.M."/>
            <person name="Akiyama K."/>
            <person name="Ansari Y."/>
            <person name="Arakawa T."/>
            <person name="Banh J."/>
            <person name="Banno F."/>
            <person name="Bowser L."/>
            <person name="Brooks S.Y."/>
            <person name="Carninci P."/>
            <person name="Chao Q."/>
            <person name="Choy N."/>
            <person name="Enju A."/>
            <person name="Goldsmith A.D."/>
            <person name="Gurjal M."/>
            <person name="Hansen N.F."/>
            <person name="Hayashizaki Y."/>
            <person name="Johnson-Hopson C."/>
            <person name="Hsuan V.W."/>
            <person name="Iida K."/>
            <person name="Karnes M."/>
            <person name="Khan S."/>
            <person name="Koesema E."/>
            <person name="Ishida J."/>
            <person name="Jiang P.X."/>
            <person name="Jones T."/>
            <person name="Kawai J."/>
            <person name="Kamiya A."/>
            <person name="Meyers C."/>
            <person name="Nakajima M."/>
            <person name="Narusaka M."/>
            <person name="Seki M."/>
            <person name="Sakurai T."/>
            <person name="Satou M."/>
            <person name="Tamse R."/>
            <person name="Vaysberg M."/>
            <person name="Wallender E.K."/>
            <person name="Wong C."/>
            <person name="Yamamura Y."/>
            <person name="Yuan S."/>
            <person name="Shinozaki K."/>
            <person name="Davis R.W."/>
            <person name="Theologis A."/>
            <person name="Ecker J.R."/>
        </authorList>
    </citation>
    <scope>NUCLEOTIDE SEQUENCE [LARGE SCALE MRNA]</scope>
    <source>
        <strain>cv. Columbia</strain>
    </source>
</reference>
<reference key="4">
    <citation type="journal article" date="2004" name="Plant Cell">
        <title>Genome-wide analysis of Arabidopsis pentatricopeptide repeat proteins reveals their essential role in organelle biogenesis.</title>
        <authorList>
            <person name="Lurin C."/>
            <person name="Andres C."/>
            <person name="Aubourg S."/>
            <person name="Bellaoui M."/>
            <person name="Bitton F."/>
            <person name="Bruyere C."/>
            <person name="Caboche M."/>
            <person name="Debast C."/>
            <person name="Gualberto J."/>
            <person name="Hoffmann B."/>
            <person name="Lecharny A."/>
            <person name="Le Ret M."/>
            <person name="Martin-Magniette M.-L."/>
            <person name="Mireau H."/>
            <person name="Peeters N."/>
            <person name="Renou J.-P."/>
            <person name="Szurek B."/>
            <person name="Taconnat L."/>
            <person name="Small I."/>
        </authorList>
    </citation>
    <scope>GENE FAMILY</scope>
</reference>
<reference key="5">
    <citation type="journal article" date="2015" name="J. Exp. Bot.">
        <title>Identification of cleavage sites and substrate proteins for two mitochondrial intermediate peptidases in Arabidopsis thaliana.</title>
        <authorList>
            <person name="Carrie C."/>
            <person name="Venne A.S."/>
            <person name="Zahedi R.P."/>
            <person name="Soll J."/>
        </authorList>
    </citation>
    <scope>IDENTIFICATION BY MASS SPECTROMETRY</scope>
    <scope>CLEAVAGE OF TRANSIT PEPTIDE AFTER CYS-26</scope>
</reference>
<gene>
    <name type="ordered locus">At3g54980</name>
    <name type="ORF">F28P10.40</name>
    <name type="ORF">T15C9.5</name>
</gene>
<feature type="transit peptide" description="Mitochondrion" evidence="1">
    <location>
        <begin position="1"/>
        <end position="26"/>
    </location>
</feature>
<feature type="chain" id="PRO_0000356141" description="Pentatricopeptide repeat-containing protein At3g54980, mitochondrial">
    <location>
        <begin position="27"/>
        <end position="851"/>
    </location>
</feature>
<feature type="repeat" description="PPR 1">
    <location>
        <begin position="162"/>
        <end position="196"/>
    </location>
</feature>
<feature type="repeat" description="PPR 2">
    <location>
        <begin position="197"/>
        <end position="231"/>
    </location>
</feature>
<feature type="repeat" description="PPR 3">
    <location>
        <begin position="232"/>
        <end position="266"/>
    </location>
</feature>
<feature type="repeat" description="PPR 4">
    <location>
        <begin position="267"/>
        <end position="301"/>
    </location>
</feature>
<feature type="repeat" description="PPR 5">
    <location>
        <begin position="303"/>
        <end position="337"/>
    </location>
</feature>
<feature type="repeat" description="PPR 6">
    <location>
        <begin position="338"/>
        <end position="372"/>
    </location>
</feature>
<feature type="repeat" description="PPR 7">
    <location>
        <begin position="373"/>
        <end position="407"/>
    </location>
</feature>
<feature type="repeat" description="PPR 8">
    <location>
        <begin position="408"/>
        <end position="438"/>
    </location>
</feature>
<feature type="repeat" description="PPR 9">
    <location>
        <begin position="442"/>
        <end position="476"/>
    </location>
</feature>
<feature type="repeat" description="PPR 10">
    <location>
        <begin position="477"/>
        <end position="511"/>
    </location>
</feature>
<feature type="repeat" description="PPR 11">
    <location>
        <begin position="512"/>
        <end position="546"/>
    </location>
</feature>
<feature type="repeat" description="PPR 12">
    <location>
        <begin position="547"/>
        <end position="577"/>
    </location>
</feature>
<feature type="repeat" description="PPR 13">
    <location>
        <begin position="583"/>
        <end position="617"/>
    </location>
</feature>
<feature type="repeat" description="PPR 14">
    <location>
        <begin position="618"/>
        <end position="652"/>
    </location>
</feature>
<feature type="repeat" description="PPR 15">
    <location>
        <begin position="653"/>
        <end position="687"/>
    </location>
</feature>
<feature type="repeat" description="PPR 16">
    <location>
        <begin position="688"/>
        <end position="722"/>
    </location>
</feature>
<feature type="repeat" description="PPR 17">
    <location>
        <begin position="723"/>
        <end position="757"/>
    </location>
</feature>
<feature type="repeat" description="PPR 18">
    <location>
        <begin position="758"/>
        <end position="792"/>
    </location>
</feature>
<feature type="repeat" description="PPR 19">
    <location>
        <begin position="793"/>
        <end position="827"/>
    </location>
</feature>
<keyword id="KW-0496">Mitochondrion</keyword>
<keyword id="KW-1185">Reference proteome</keyword>
<keyword id="KW-0677">Repeat</keyword>
<keyword id="KW-0809">Transit peptide</keyword>
<organism>
    <name type="scientific">Arabidopsis thaliana</name>
    <name type="common">Mouse-ear cress</name>
    <dbReference type="NCBI Taxonomy" id="3702"/>
    <lineage>
        <taxon>Eukaryota</taxon>
        <taxon>Viridiplantae</taxon>
        <taxon>Streptophyta</taxon>
        <taxon>Embryophyta</taxon>
        <taxon>Tracheophyta</taxon>
        <taxon>Spermatophyta</taxon>
        <taxon>Magnoliopsida</taxon>
        <taxon>eudicotyledons</taxon>
        <taxon>Gunneridae</taxon>
        <taxon>Pentapetalae</taxon>
        <taxon>rosids</taxon>
        <taxon>malvids</taxon>
        <taxon>Brassicales</taxon>
        <taxon>Brassicaceae</taxon>
        <taxon>Camelineae</taxon>
        <taxon>Arabidopsis</taxon>
    </lineage>
</organism>
<dbReference type="EMBL" id="AL049655">
    <property type="protein sequence ID" value="CAB41086.1"/>
    <property type="molecule type" value="Genomic_DNA"/>
</dbReference>
<dbReference type="EMBL" id="AL132970">
    <property type="status" value="NOT_ANNOTATED_CDS"/>
    <property type="molecule type" value="Genomic_DNA"/>
</dbReference>
<dbReference type="EMBL" id="CP002686">
    <property type="protein sequence ID" value="AEE79322.1"/>
    <property type="molecule type" value="Genomic_DNA"/>
</dbReference>
<dbReference type="EMBL" id="CP002686">
    <property type="protein sequence ID" value="ANM63798.1"/>
    <property type="molecule type" value="Genomic_DNA"/>
</dbReference>
<dbReference type="EMBL" id="BT003973">
    <property type="protein sequence ID" value="AAO42016.1"/>
    <property type="molecule type" value="mRNA"/>
</dbReference>
<dbReference type="PIR" id="T06722">
    <property type="entry name" value="T06722"/>
</dbReference>
<dbReference type="RefSeq" id="NP_001325869.1">
    <property type="nucleotide sequence ID" value="NM_001339711.1"/>
</dbReference>
<dbReference type="RefSeq" id="NP_191058.1">
    <property type="nucleotide sequence ID" value="NM_115355.3"/>
</dbReference>
<dbReference type="SMR" id="Q9SV46"/>
<dbReference type="FunCoup" id="Q9SV46">
    <property type="interactions" value="616"/>
</dbReference>
<dbReference type="PaxDb" id="3702-AT3G54980.1"/>
<dbReference type="ProteomicsDB" id="249114"/>
<dbReference type="EnsemblPlants" id="AT3G54980.1">
    <property type="protein sequence ID" value="AT3G54980.1"/>
    <property type="gene ID" value="AT3G54980"/>
</dbReference>
<dbReference type="EnsemblPlants" id="AT3G54980.2">
    <property type="protein sequence ID" value="AT3G54980.2"/>
    <property type="gene ID" value="AT3G54980"/>
</dbReference>
<dbReference type="GeneID" id="824663"/>
<dbReference type="Gramene" id="AT3G54980.1">
    <property type="protein sequence ID" value="AT3G54980.1"/>
    <property type="gene ID" value="AT3G54980"/>
</dbReference>
<dbReference type="Gramene" id="AT3G54980.2">
    <property type="protein sequence ID" value="AT3G54980.2"/>
    <property type="gene ID" value="AT3G54980"/>
</dbReference>
<dbReference type="KEGG" id="ath:AT3G54980"/>
<dbReference type="Araport" id="AT3G54980"/>
<dbReference type="TAIR" id="AT3G54980"/>
<dbReference type="eggNOG" id="KOG4197">
    <property type="taxonomic scope" value="Eukaryota"/>
</dbReference>
<dbReference type="HOGENOM" id="CLU_002706_49_12_1"/>
<dbReference type="InParanoid" id="Q9SV46"/>
<dbReference type="OMA" id="ATTLMHG"/>
<dbReference type="PhylomeDB" id="Q9SV46"/>
<dbReference type="PRO" id="PR:Q9SV46"/>
<dbReference type="Proteomes" id="UP000006548">
    <property type="component" value="Chromosome 3"/>
</dbReference>
<dbReference type="ExpressionAtlas" id="Q9SV46">
    <property type="expression patterns" value="baseline and differential"/>
</dbReference>
<dbReference type="GO" id="GO:0005739">
    <property type="term" value="C:mitochondrion"/>
    <property type="evidence" value="ECO:0007669"/>
    <property type="project" value="UniProtKB-SubCell"/>
</dbReference>
<dbReference type="Gene3D" id="1.25.40.10">
    <property type="entry name" value="Tetratricopeptide repeat domain"/>
    <property type="match status" value="8"/>
</dbReference>
<dbReference type="InterPro" id="IPR002885">
    <property type="entry name" value="Pentatricopeptide_rpt"/>
</dbReference>
<dbReference type="InterPro" id="IPR011990">
    <property type="entry name" value="TPR-like_helical_dom_sf"/>
</dbReference>
<dbReference type="NCBIfam" id="TIGR00756">
    <property type="entry name" value="PPR"/>
    <property type="match status" value="15"/>
</dbReference>
<dbReference type="PANTHER" id="PTHR47932">
    <property type="entry name" value="ATPASE EXPRESSION PROTEIN 3"/>
    <property type="match status" value="1"/>
</dbReference>
<dbReference type="PANTHER" id="PTHR47932:SF2">
    <property type="entry name" value="OS10G0484300 PROTEIN"/>
    <property type="match status" value="1"/>
</dbReference>
<dbReference type="Pfam" id="PF01535">
    <property type="entry name" value="PPR"/>
    <property type="match status" value="5"/>
</dbReference>
<dbReference type="Pfam" id="PF12854">
    <property type="entry name" value="PPR_1"/>
    <property type="match status" value="2"/>
</dbReference>
<dbReference type="Pfam" id="PF13041">
    <property type="entry name" value="PPR_2"/>
    <property type="match status" value="5"/>
</dbReference>
<dbReference type="SUPFAM" id="SSF81901">
    <property type="entry name" value="HCP-like"/>
    <property type="match status" value="1"/>
</dbReference>
<dbReference type="SUPFAM" id="SSF48452">
    <property type="entry name" value="TPR-like"/>
    <property type="match status" value="1"/>
</dbReference>
<dbReference type="PROSITE" id="PS51375">
    <property type="entry name" value="PPR"/>
    <property type="match status" value="19"/>
</dbReference>
<name>PP282_ARATH</name>